<feature type="chain" id="PRO_0000451540" description="Geranylgeranyl pyrophosphate synthase dpmaD">
    <location>
        <begin position="1"/>
        <end position="331"/>
    </location>
</feature>
<feature type="binding site" evidence="1">
    <location>
        <position position="53"/>
    </location>
    <ligand>
        <name>isopentenyl diphosphate</name>
        <dbReference type="ChEBI" id="CHEBI:128769"/>
    </ligand>
</feature>
<feature type="binding site" evidence="1">
    <location>
        <position position="56"/>
    </location>
    <ligand>
        <name>isopentenyl diphosphate</name>
        <dbReference type="ChEBI" id="CHEBI:128769"/>
    </ligand>
</feature>
<feature type="binding site" evidence="1">
    <location>
        <position position="85"/>
    </location>
    <ligand>
        <name>isopentenyl diphosphate</name>
        <dbReference type="ChEBI" id="CHEBI:128769"/>
    </ligand>
</feature>
<feature type="binding site" evidence="1">
    <location>
        <position position="92"/>
    </location>
    <ligand>
        <name>Mg(2+)</name>
        <dbReference type="ChEBI" id="CHEBI:18420"/>
        <label>1</label>
    </ligand>
</feature>
<feature type="binding site" evidence="1">
    <location>
        <position position="92"/>
    </location>
    <ligand>
        <name>Mg(2+)</name>
        <dbReference type="ChEBI" id="CHEBI:18420"/>
        <label>2</label>
    </ligand>
</feature>
<feature type="binding site" evidence="1">
    <location>
        <position position="96"/>
    </location>
    <ligand>
        <name>Mg(2+)</name>
        <dbReference type="ChEBI" id="CHEBI:18420"/>
        <label>1</label>
    </ligand>
</feature>
<feature type="binding site" evidence="1">
    <location>
        <position position="96"/>
    </location>
    <ligand>
        <name>Mg(2+)</name>
        <dbReference type="ChEBI" id="CHEBI:18420"/>
        <label>2</label>
    </ligand>
</feature>
<feature type="binding site" evidence="1">
    <location>
        <position position="101"/>
    </location>
    <ligand>
        <name>dimethylallyl diphosphate</name>
        <dbReference type="ChEBI" id="CHEBI:57623"/>
    </ligand>
</feature>
<feature type="binding site" evidence="1">
    <location>
        <position position="102"/>
    </location>
    <ligand>
        <name>isopentenyl diphosphate</name>
        <dbReference type="ChEBI" id="CHEBI:128769"/>
    </ligand>
</feature>
<feature type="binding site" evidence="1">
    <location>
        <position position="179"/>
    </location>
    <ligand>
        <name>dimethylallyl diphosphate</name>
        <dbReference type="ChEBI" id="CHEBI:57623"/>
    </ligand>
</feature>
<feature type="binding site" evidence="1">
    <location>
        <position position="180"/>
    </location>
    <ligand>
        <name>dimethylallyl diphosphate</name>
        <dbReference type="ChEBI" id="CHEBI:57623"/>
    </ligand>
</feature>
<feature type="binding site" evidence="1">
    <location>
        <position position="213"/>
    </location>
    <ligand>
        <name>dimethylallyl diphosphate</name>
        <dbReference type="ChEBI" id="CHEBI:57623"/>
    </ligand>
</feature>
<feature type="binding site" evidence="1">
    <location>
        <position position="216"/>
    </location>
    <ligand>
        <name>Mg(2+)</name>
        <dbReference type="ChEBI" id="CHEBI:18420"/>
        <label>3</label>
    </ligand>
</feature>
<feature type="binding site" evidence="1">
    <location>
        <position position="220"/>
    </location>
    <ligand>
        <name>dimethylallyl diphosphate</name>
        <dbReference type="ChEBI" id="CHEBI:57623"/>
    </ligand>
</feature>
<feature type="binding site" evidence="1">
    <location>
        <position position="230"/>
    </location>
    <ligand>
        <name>dimethylallyl diphosphate</name>
        <dbReference type="ChEBI" id="CHEBI:57623"/>
    </ligand>
</feature>
<feature type="binding site" evidence="1">
    <location>
        <position position="240"/>
    </location>
    <ligand>
        <name>dimethylallyl diphosphate</name>
        <dbReference type="ChEBI" id="CHEBI:57623"/>
    </ligand>
</feature>
<keyword id="KW-0460">Magnesium</keyword>
<keyword id="KW-0479">Metal-binding</keyword>
<keyword id="KW-0808">Transferase</keyword>
<reference key="1">
    <citation type="journal article" date="2014" name="BMC Genomics">
        <title>Comparative genome analysis of entomopathogenic fungi reveals a complex set of secreted proteins.</title>
        <authorList>
            <person name="Staats C.C."/>
            <person name="Junges A."/>
            <person name="Guedes R.L."/>
            <person name="Thompson C.E."/>
            <person name="de Morais G.L."/>
            <person name="Boldo J.T."/>
            <person name="de Almeida L.G."/>
            <person name="Andreis F.C."/>
            <person name="Gerber A.L."/>
            <person name="Sbaraini N."/>
            <person name="da Paixao R.L."/>
            <person name="Broetto L."/>
            <person name="Landell M."/>
            <person name="Santi L."/>
            <person name="Beys-da-Silva W.O."/>
            <person name="Silveira C.P."/>
            <person name="Serrano T.R."/>
            <person name="de Oliveira E.S."/>
            <person name="Kmetzsch L."/>
            <person name="Vainstein M.H."/>
            <person name="de Vasconcelos A.T."/>
            <person name="Schrank A."/>
        </authorList>
    </citation>
    <scope>NUCLEOTIDE SEQUENCE [LARGE SCALE GENOMIC DNA]</scope>
</reference>
<reference key="2">
    <citation type="journal article" date="2020" name="Nat. Commun.">
        <title>Synthetic biology based construction of biological activity-related library of fungal decalin-containing diterpenoid pyrones.</title>
        <authorList>
            <person name="Tsukada K."/>
            <person name="Shinki S."/>
            <person name="Kaneko A."/>
            <person name="Murakami K."/>
            <person name="Irie K."/>
            <person name="Murai M."/>
            <person name="Miyoshi H."/>
            <person name="Dan S."/>
            <person name="Kawaji K."/>
            <person name="Hayashi H."/>
            <person name="Kodama E.N."/>
            <person name="Hori A."/>
            <person name="Salim E."/>
            <person name="Kuraishi T."/>
            <person name="Hirata N."/>
            <person name="Kanda Y."/>
            <person name="Asai T."/>
        </authorList>
    </citation>
    <scope>FUNCTION</scope>
    <scope>PATHWAY</scope>
    <scope>BIOTECHNOLOGY</scope>
</reference>
<organism>
    <name type="scientific">Metarhizium anisopliae</name>
    <name type="common">Entomophthora anisopliae</name>
    <dbReference type="NCBI Taxonomy" id="5530"/>
    <lineage>
        <taxon>Eukaryota</taxon>
        <taxon>Fungi</taxon>
        <taxon>Dikarya</taxon>
        <taxon>Ascomycota</taxon>
        <taxon>Pezizomycotina</taxon>
        <taxon>Sordariomycetes</taxon>
        <taxon>Hypocreomycetidae</taxon>
        <taxon>Hypocreales</taxon>
        <taxon>Clavicipitaceae</taxon>
        <taxon>Metarhizium</taxon>
    </lineage>
</organism>
<proteinExistence type="evidence at protein level"/>
<evidence type="ECO:0000250" key="1">
    <source>
        <dbReference type="UniProtKB" id="Q12051"/>
    </source>
</evidence>
<evidence type="ECO:0000269" key="2">
    <source>
    </source>
</evidence>
<evidence type="ECO:0000303" key="3">
    <source>
    </source>
</evidence>
<evidence type="ECO:0000305" key="4"/>
<evidence type="ECO:0000305" key="5">
    <source>
    </source>
</evidence>
<gene>
    <name evidence="3" type="primary">dpmaD</name>
    <name type="ORF">MANI_006355</name>
</gene>
<sequence length="331" mass="36910">MSTSAPNTNELNSPVLETQPLAGDAALLHSSIADGYEEIIRAPFDYLLNLPGKDVRSKMISAFNQWLCIPADKLEVIKRIVMLLHNASLLIDDIQDSSKLRRGLPVSHHIFGVPQTINAANYAYFLAQQELPKLGDPKAFEIYTEELLSLHRGQGMDIYWREASKCPTEEEYFSMVSHKTGGLFRLAIRLMQLASDKNCDFVPLVNVLGVIFQIRDDYLNLQSHAYTVNKGFGEDLTEGKYSFPIIHSIRSDPTNIQLSSILKQRTTDVDVKLFAVECIKATGSFEHCKEKIAELVAEARQLIKEMGNSVPGSAEAVDRVLDLIGLEPESS</sequence>
<name>DPMAD_METAN</name>
<dbReference type="EC" id="2.5.1.-" evidence="5"/>
<dbReference type="EC" id="2.5.1.1" evidence="1"/>
<dbReference type="EC" id="2.5.1.29" evidence="1"/>
<dbReference type="EC" id="2.5.1.10" evidence="1"/>
<dbReference type="EMBL" id="JNNZ01000128">
    <property type="protein sequence ID" value="KFG81919.1"/>
    <property type="molecule type" value="Genomic_DNA"/>
</dbReference>
<dbReference type="SMR" id="P9WEX9"/>
<dbReference type="VEuPathDB" id="FungiDB:MAN_09809"/>
<dbReference type="OrthoDB" id="1549at5529"/>
<dbReference type="UniPathway" id="UPA00213"/>
<dbReference type="GO" id="GO:0004337">
    <property type="term" value="F:(2E,6E)-farnesyl diphosphate synthase activity"/>
    <property type="evidence" value="ECO:0007669"/>
    <property type="project" value="UniProtKB-EC"/>
</dbReference>
<dbReference type="GO" id="GO:0004161">
    <property type="term" value="F:dimethylallyltranstransferase activity"/>
    <property type="evidence" value="ECO:0007669"/>
    <property type="project" value="UniProtKB-EC"/>
</dbReference>
<dbReference type="GO" id="GO:0004311">
    <property type="term" value="F:geranylgeranyl diphosphate synthase activity"/>
    <property type="evidence" value="ECO:0007669"/>
    <property type="project" value="UniProtKB-EC"/>
</dbReference>
<dbReference type="GO" id="GO:0046872">
    <property type="term" value="F:metal ion binding"/>
    <property type="evidence" value="ECO:0007669"/>
    <property type="project" value="UniProtKB-KW"/>
</dbReference>
<dbReference type="GO" id="GO:0046165">
    <property type="term" value="P:alcohol biosynthetic process"/>
    <property type="evidence" value="ECO:0007669"/>
    <property type="project" value="UniProtKB-ARBA"/>
</dbReference>
<dbReference type="GO" id="GO:0043386">
    <property type="term" value="P:mycotoxin biosynthetic process"/>
    <property type="evidence" value="ECO:0007669"/>
    <property type="project" value="UniProtKB-ARBA"/>
</dbReference>
<dbReference type="GO" id="GO:0016114">
    <property type="term" value="P:terpenoid biosynthetic process"/>
    <property type="evidence" value="ECO:0007669"/>
    <property type="project" value="UniProtKB-UniPathway"/>
</dbReference>
<dbReference type="CDD" id="cd00685">
    <property type="entry name" value="Trans_IPPS_HT"/>
    <property type="match status" value="1"/>
</dbReference>
<dbReference type="Gene3D" id="1.10.600.10">
    <property type="entry name" value="Farnesyl Diphosphate Synthase"/>
    <property type="match status" value="1"/>
</dbReference>
<dbReference type="InterPro" id="IPR008949">
    <property type="entry name" value="Isoprenoid_synthase_dom_sf"/>
</dbReference>
<dbReference type="InterPro" id="IPR000092">
    <property type="entry name" value="Polyprenyl_synt"/>
</dbReference>
<dbReference type="InterPro" id="IPR033749">
    <property type="entry name" value="Polyprenyl_synt_CS"/>
</dbReference>
<dbReference type="PANTHER" id="PTHR12001">
    <property type="entry name" value="GERANYLGERANYL PYROPHOSPHATE SYNTHASE"/>
    <property type="match status" value="1"/>
</dbReference>
<dbReference type="PANTHER" id="PTHR12001:SF70">
    <property type="entry name" value="PYROPHOSPHATE SYNTHETASE ATMG, PUTATIVE (AFU_ORTHOLOGUE AFUA_8G02400)-RELATED"/>
    <property type="match status" value="1"/>
</dbReference>
<dbReference type="Pfam" id="PF00348">
    <property type="entry name" value="polyprenyl_synt"/>
    <property type="match status" value="1"/>
</dbReference>
<dbReference type="SFLD" id="SFLDS00005">
    <property type="entry name" value="Isoprenoid_Synthase_Type_I"/>
    <property type="match status" value="1"/>
</dbReference>
<dbReference type="SUPFAM" id="SSF48576">
    <property type="entry name" value="Terpenoid synthases"/>
    <property type="match status" value="1"/>
</dbReference>
<dbReference type="PROSITE" id="PS00723">
    <property type="entry name" value="POLYPRENYL_SYNTHASE_1"/>
    <property type="match status" value="1"/>
</dbReference>
<dbReference type="PROSITE" id="PS00444">
    <property type="entry name" value="POLYPRENYL_SYNTHASE_2"/>
    <property type="match status" value="1"/>
</dbReference>
<accession>P9WEX9</accession>
<protein>
    <recommendedName>
        <fullName evidence="3">Geranylgeranyl pyrophosphate synthase dpmaD</fullName>
        <shortName evidence="4">GGPP synthase</shortName>
        <shortName evidence="4">GGPPSase</shortName>
        <ecNumber evidence="5">2.5.1.-</ecNumber>
    </recommendedName>
    <alternativeName>
        <fullName evidence="1">(2E,6E)-farnesyl diphosphate synthase</fullName>
    </alternativeName>
    <alternativeName>
        <fullName evidence="1">Dimethylallyltranstransferase</fullName>
        <ecNumber evidence="1">2.5.1.1</ecNumber>
    </alternativeName>
    <alternativeName>
        <fullName evidence="3">Diterpenoid pyrone biosynthesis cluster protein D</fullName>
    </alternativeName>
    <alternativeName>
        <fullName evidence="1">Farnesyl diphosphate synthase</fullName>
    </alternativeName>
    <alternativeName>
        <fullName evidence="1">Farnesyltranstransferase</fullName>
        <ecNumber evidence="1">2.5.1.29</ecNumber>
    </alternativeName>
    <alternativeName>
        <fullName evidence="1">Geranylgeranyl diphosphate synthase</fullName>
    </alternativeName>
    <alternativeName>
        <fullName evidence="1">Geranyltranstransferase</fullName>
        <ecNumber evidence="1">2.5.1.10</ecNumber>
    </alternativeName>
</protein>
<comment type="function">
    <text evidence="2 5">Geranylgeranyl pyrophosphate synthase; part of the gene cluster that mediates the biosynthesis of the diterpenoid pyrones subglutinols A and B (PubMed:32286350). The first step of the pathway is the synthesis of the alpha-pyrone moiety by the polyketide synthase dpmaA via condensation of one acetyl-CoA starter unit with 3 malonyl-CoA units and 2 methylations (Probable). The alpha-pyrone is then combined with geranylgeranyl pyrophosphate (GGPP) formed by the GGPP synthase dpmaD through the action of the prenyltransferase dpmaC to yield a linear alpha-pyrone diterpenoid (Probable). Subsequent steps in the diterpenoid pyrone biosynthetic pathway involve the decalin core formation, which is initiated by the epoxidation of the C10-C11 olefin by the FAD-dependent oxidoreductase dpmaE, and is followed by a cyclization cascade catalyzed by the terpene cyclase dpmaB (Probable). The dehydrogenase dpmaF is then involved in tetrahydrofuran (THF) ring formation at the C5 unit to complete the formation of subglutinols A and B (PubMed:32286350).</text>
</comment>
<comment type="catalytic activity">
    <reaction evidence="1">
        <text>isopentenyl diphosphate + dimethylallyl diphosphate = (2E)-geranyl diphosphate + diphosphate</text>
        <dbReference type="Rhea" id="RHEA:22408"/>
        <dbReference type="ChEBI" id="CHEBI:33019"/>
        <dbReference type="ChEBI" id="CHEBI:57623"/>
        <dbReference type="ChEBI" id="CHEBI:58057"/>
        <dbReference type="ChEBI" id="CHEBI:128769"/>
        <dbReference type="EC" id="2.5.1.1"/>
    </reaction>
</comment>
<comment type="catalytic activity">
    <reaction evidence="1">
        <text>isopentenyl diphosphate + (2E)-geranyl diphosphate = (2E,6E)-farnesyl diphosphate + diphosphate</text>
        <dbReference type="Rhea" id="RHEA:19361"/>
        <dbReference type="ChEBI" id="CHEBI:33019"/>
        <dbReference type="ChEBI" id="CHEBI:58057"/>
        <dbReference type="ChEBI" id="CHEBI:128769"/>
        <dbReference type="ChEBI" id="CHEBI:175763"/>
        <dbReference type="EC" id="2.5.1.10"/>
    </reaction>
</comment>
<comment type="catalytic activity">
    <reaction evidence="1">
        <text>isopentenyl diphosphate + (2E,6E)-farnesyl diphosphate = (2E,6E,10E)-geranylgeranyl diphosphate + diphosphate</text>
        <dbReference type="Rhea" id="RHEA:17653"/>
        <dbReference type="ChEBI" id="CHEBI:33019"/>
        <dbReference type="ChEBI" id="CHEBI:58756"/>
        <dbReference type="ChEBI" id="CHEBI:128769"/>
        <dbReference type="ChEBI" id="CHEBI:175763"/>
        <dbReference type="EC" id="2.5.1.29"/>
    </reaction>
</comment>
<comment type="cofactor">
    <cofactor evidence="1">
        <name>Mg(2+)</name>
        <dbReference type="ChEBI" id="CHEBI:18420"/>
    </cofactor>
    <text evidence="1">Binds 3 Mg(2+) ions per subunit.</text>
</comment>
<comment type="pathway">
    <text evidence="2">Secondary metabolite biosynthesis; terpenoid biosynthesis.</text>
</comment>
<comment type="biotechnology">
    <text evidence="2">Diterpenoid pyrones display various biological activities and subglutinol A shows insecticidal and anti-HIV activities.</text>
</comment>
<comment type="similarity">
    <text evidence="4">Belongs to the FPP/GGPP synthase family.</text>
</comment>